<protein>
    <recommendedName>
        <fullName evidence="1">DNA gyrase inhibitor YacG</fullName>
    </recommendedName>
</protein>
<organism>
    <name type="scientific">Pseudomonas syringae pv. syringae (strain B728a)</name>
    <dbReference type="NCBI Taxonomy" id="205918"/>
    <lineage>
        <taxon>Bacteria</taxon>
        <taxon>Pseudomonadati</taxon>
        <taxon>Pseudomonadota</taxon>
        <taxon>Gammaproteobacteria</taxon>
        <taxon>Pseudomonadales</taxon>
        <taxon>Pseudomonadaceae</taxon>
        <taxon>Pseudomonas</taxon>
        <taxon>Pseudomonas syringae</taxon>
    </lineage>
</organism>
<proteinExistence type="inferred from homology"/>
<reference key="1">
    <citation type="journal article" date="2005" name="Proc. Natl. Acad. Sci. U.S.A.">
        <title>Comparison of the complete genome sequences of Pseudomonas syringae pv. syringae B728a and pv. tomato DC3000.</title>
        <authorList>
            <person name="Feil H."/>
            <person name="Feil W.S."/>
            <person name="Chain P."/>
            <person name="Larimer F."/>
            <person name="Dibartolo G."/>
            <person name="Copeland A."/>
            <person name="Lykidis A."/>
            <person name="Trong S."/>
            <person name="Nolan M."/>
            <person name="Goltsman E."/>
            <person name="Thiel J."/>
            <person name="Malfatti S."/>
            <person name="Loper J.E."/>
            <person name="Lapidus A."/>
            <person name="Detter J.C."/>
            <person name="Land M."/>
            <person name="Richardson P.M."/>
            <person name="Kyrpides N.C."/>
            <person name="Ivanova N."/>
            <person name="Lindow S.E."/>
        </authorList>
    </citation>
    <scope>NUCLEOTIDE SEQUENCE [LARGE SCALE GENOMIC DNA]</scope>
    <source>
        <strain>B728a</strain>
    </source>
</reference>
<name>YACG_PSEU2</name>
<keyword id="KW-0479">Metal-binding</keyword>
<keyword id="KW-0862">Zinc</keyword>
<sequence>MSQPMTVQCPTCDAPVEWSAASPSRPFCSERCKLIDLGAWASEEHAIPVSPDAEDELFSGDLEAPHRGH</sequence>
<accession>Q4ZYC0</accession>
<evidence type="ECO:0000255" key="1">
    <source>
        <dbReference type="HAMAP-Rule" id="MF_00649"/>
    </source>
</evidence>
<evidence type="ECO:0000256" key="2">
    <source>
        <dbReference type="SAM" id="MobiDB-lite"/>
    </source>
</evidence>
<gene>
    <name evidence="1" type="primary">yacG</name>
    <name type="ordered locus">Psyr_0794</name>
</gene>
<dbReference type="EMBL" id="CP000075">
    <property type="protein sequence ID" value="AAY35852.1"/>
    <property type="molecule type" value="Genomic_DNA"/>
</dbReference>
<dbReference type="RefSeq" id="WP_002552020.1">
    <property type="nucleotide sequence ID" value="NC_007005.1"/>
</dbReference>
<dbReference type="RefSeq" id="YP_233890.1">
    <property type="nucleotide sequence ID" value="NC_007005.1"/>
</dbReference>
<dbReference type="SMR" id="Q4ZYC0"/>
<dbReference type="STRING" id="205918.Psyr_0794"/>
<dbReference type="GeneID" id="96217152"/>
<dbReference type="KEGG" id="psb:Psyr_0794"/>
<dbReference type="PATRIC" id="fig|205918.7.peg.820"/>
<dbReference type="eggNOG" id="COG3024">
    <property type="taxonomic scope" value="Bacteria"/>
</dbReference>
<dbReference type="HOGENOM" id="CLU_178280_3_2_6"/>
<dbReference type="OrthoDB" id="9809663at2"/>
<dbReference type="Proteomes" id="UP000000426">
    <property type="component" value="Chromosome"/>
</dbReference>
<dbReference type="GO" id="GO:0008657">
    <property type="term" value="F:DNA topoisomerase type II (double strand cut, ATP-hydrolyzing) inhibitor activity"/>
    <property type="evidence" value="ECO:0007669"/>
    <property type="project" value="UniProtKB-UniRule"/>
</dbReference>
<dbReference type="GO" id="GO:0008270">
    <property type="term" value="F:zinc ion binding"/>
    <property type="evidence" value="ECO:0007669"/>
    <property type="project" value="UniProtKB-UniRule"/>
</dbReference>
<dbReference type="GO" id="GO:0006355">
    <property type="term" value="P:regulation of DNA-templated transcription"/>
    <property type="evidence" value="ECO:0007669"/>
    <property type="project" value="InterPro"/>
</dbReference>
<dbReference type="Gene3D" id="3.30.50.10">
    <property type="entry name" value="Erythroid Transcription Factor GATA-1, subunit A"/>
    <property type="match status" value="1"/>
</dbReference>
<dbReference type="HAMAP" id="MF_00649">
    <property type="entry name" value="DNA_gyrase_inhibitor_YacG"/>
    <property type="match status" value="1"/>
</dbReference>
<dbReference type="InterPro" id="IPR005584">
    <property type="entry name" value="DNA_gyrase_inhibitor_YacG"/>
</dbReference>
<dbReference type="InterPro" id="IPR013088">
    <property type="entry name" value="Znf_NHR/GATA"/>
</dbReference>
<dbReference type="NCBIfam" id="NF001638">
    <property type="entry name" value="PRK00418.1"/>
    <property type="match status" value="1"/>
</dbReference>
<dbReference type="PANTHER" id="PTHR36150">
    <property type="entry name" value="DNA GYRASE INHIBITOR YACG"/>
    <property type="match status" value="1"/>
</dbReference>
<dbReference type="PANTHER" id="PTHR36150:SF1">
    <property type="entry name" value="DNA GYRASE INHIBITOR YACG"/>
    <property type="match status" value="1"/>
</dbReference>
<dbReference type="Pfam" id="PF03884">
    <property type="entry name" value="YacG"/>
    <property type="match status" value="1"/>
</dbReference>
<dbReference type="SUPFAM" id="SSF57716">
    <property type="entry name" value="Glucocorticoid receptor-like (DNA-binding domain)"/>
    <property type="match status" value="1"/>
</dbReference>
<feature type="chain" id="PRO_1000056986" description="DNA gyrase inhibitor YacG">
    <location>
        <begin position="1"/>
        <end position="69"/>
    </location>
</feature>
<feature type="region of interest" description="Disordered" evidence="2">
    <location>
        <begin position="48"/>
        <end position="69"/>
    </location>
</feature>
<feature type="binding site" evidence="1">
    <location>
        <position position="9"/>
    </location>
    <ligand>
        <name>Zn(2+)</name>
        <dbReference type="ChEBI" id="CHEBI:29105"/>
    </ligand>
</feature>
<feature type="binding site" evidence="1">
    <location>
        <position position="12"/>
    </location>
    <ligand>
        <name>Zn(2+)</name>
        <dbReference type="ChEBI" id="CHEBI:29105"/>
    </ligand>
</feature>
<feature type="binding site" evidence="1">
    <location>
        <position position="28"/>
    </location>
    <ligand>
        <name>Zn(2+)</name>
        <dbReference type="ChEBI" id="CHEBI:29105"/>
    </ligand>
</feature>
<feature type="binding site" evidence="1">
    <location>
        <position position="32"/>
    </location>
    <ligand>
        <name>Zn(2+)</name>
        <dbReference type="ChEBI" id="CHEBI:29105"/>
    </ligand>
</feature>
<comment type="function">
    <text evidence="1">Inhibits all the catalytic activities of DNA gyrase by preventing its interaction with DNA. Acts by binding directly to the C-terminal domain of GyrB, which probably disrupts DNA binding by the gyrase.</text>
</comment>
<comment type="cofactor">
    <cofactor evidence="1">
        <name>Zn(2+)</name>
        <dbReference type="ChEBI" id="CHEBI:29105"/>
    </cofactor>
    <text evidence="1">Binds 1 zinc ion.</text>
</comment>
<comment type="subunit">
    <text evidence="1">Interacts with GyrB.</text>
</comment>
<comment type="similarity">
    <text evidence="1">Belongs to the DNA gyrase inhibitor YacG family.</text>
</comment>